<reference key="1">
    <citation type="journal article" date="2007" name="Science">
        <title>Legumes symbioses: absence of nod genes in photosynthetic bradyrhizobia.</title>
        <authorList>
            <person name="Giraud E."/>
            <person name="Moulin L."/>
            <person name="Vallenet D."/>
            <person name="Barbe V."/>
            <person name="Cytryn E."/>
            <person name="Avarre J.-C."/>
            <person name="Jaubert M."/>
            <person name="Simon D."/>
            <person name="Cartieaux F."/>
            <person name="Prin Y."/>
            <person name="Bena G."/>
            <person name="Hannibal L."/>
            <person name="Fardoux J."/>
            <person name="Kojadinovic M."/>
            <person name="Vuillet L."/>
            <person name="Lajus A."/>
            <person name="Cruveiller S."/>
            <person name="Rouy Z."/>
            <person name="Mangenot S."/>
            <person name="Segurens B."/>
            <person name="Dossat C."/>
            <person name="Franck W.L."/>
            <person name="Chang W.-S."/>
            <person name="Saunders E."/>
            <person name="Bruce D."/>
            <person name="Richardson P."/>
            <person name="Normand P."/>
            <person name="Dreyfus B."/>
            <person name="Pignol D."/>
            <person name="Stacey G."/>
            <person name="Emerich D."/>
            <person name="Vermeglio A."/>
            <person name="Medigue C."/>
            <person name="Sadowsky M."/>
        </authorList>
    </citation>
    <scope>NUCLEOTIDE SEQUENCE [LARGE SCALE GENOMIC DNA]</scope>
    <source>
        <strain>ORS 278</strain>
    </source>
</reference>
<organism>
    <name type="scientific">Bradyrhizobium sp. (strain ORS 278)</name>
    <dbReference type="NCBI Taxonomy" id="114615"/>
    <lineage>
        <taxon>Bacteria</taxon>
        <taxon>Pseudomonadati</taxon>
        <taxon>Pseudomonadota</taxon>
        <taxon>Alphaproteobacteria</taxon>
        <taxon>Hyphomicrobiales</taxon>
        <taxon>Nitrobacteraceae</taxon>
        <taxon>Bradyrhizobium</taxon>
    </lineage>
</organism>
<accession>A4YUE1</accession>
<feature type="chain" id="PRO_1000011574" description="GTPase Der">
    <location>
        <begin position="1"/>
        <end position="456"/>
    </location>
</feature>
<feature type="domain" description="EngA-type G 1">
    <location>
        <begin position="3"/>
        <end position="167"/>
    </location>
</feature>
<feature type="domain" description="EngA-type G 2">
    <location>
        <begin position="185"/>
        <end position="360"/>
    </location>
</feature>
<feature type="domain" description="KH-like" evidence="1">
    <location>
        <begin position="361"/>
        <end position="445"/>
    </location>
</feature>
<feature type="region of interest" description="Disordered" evidence="2">
    <location>
        <begin position="162"/>
        <end position="181"/>
    </location>
</feature>
<feature type="compositionally biased region" description="Acidic residues" evidence="2">
    <location>
        <begin position="166"/>
        <end position="178"/>
    </location>
</feature>
<feature type="binding site" evidence="1">
    <location>
        <begin position="9"/>
        <end position="16"/>
    </location>
    <ligand>
        <name>GTP</name>
        <dbReference type="ChEBI" id="CHEBI:37565"/>
        <label>1</label>
    </ligand>
</feature>
<feature type="binding site" evidence="1">
    <location>
        <begin position="56"/>
        <end position="60"/>
    </location>
    <ligand>
        <name>GTP</name>
        <dbReference type="ChEBI" id="CHEBI:37565"/>
        <label>1</label>
    </ligand>
</feature>
<feature type="binding site" evidence="1">
    <location>
        <begin position="119"/>
        <end position="122"/>
    </location>
    <ligand>
        <name>GTP</name>
        <dbReference type="ChEBI" id="CHEBI:37565"/>
        <label>1</label>
    </ligand>
</feature>
<feature type="binding site" evidence="1">
    <location>
        <begin position="191"/>
        <end position="198"/>
    </location>
    <ligand>
        <name>GTP</name>
        <dbReference type="ChEBI" id="CHEBI:37565"/>
        <label>2</label>
    </ligand>
</feature>
<feature type="binding site" evidence="1">
    <location>
        <begin position="238"/>
        <end position="242"/>
    </location>
    <ligand>
        <name>GTP</name>
        <dbReference type="ChEBI" id="CHEBI:37565"/>
        <label>2</label>
    </ligand>
</feature>
<feature type="binding site" evidence="1">
    <location>
        <begin position="303"/>
        <end position="306"/>
    </location>
    <ligand>
        <name>GTP</name>
        <dbReference type="ChEBI" id="CHEBI:37565"/>
        <label>2</label>
    </ligand>
</feature>
<dbReference type="EMBL" id="CU234118">
    <property type="protein sequence ID" value="CAL77517.1"/>
    <property type="molecule type" value="Genomic_DNA"/>
</dbReference>
<dbReference type="RefSeq" id="WP_011926659.1">
    <property type="nucleotide sequence ID" value="NC_009445.1"/>
</dbReference>
<dbReference type="SMR" id="A4YUE1"/>
<dbReference type="STRING" id="114615.BRADO3746"/>
<dbReference type="KEGG" id="bra:BRADO3746"/>
<dbReference type="eggNOG" id="COG1160">
    <property type="taxonomic scope" value="Bacteria"/>
</dbReference>
<dbReference type="HOGENOM" id="CLU_016077_5_0_5"/>
<dbReference type="OrthoDB" id="9805918at2"/>
<dbReference type="Proteomes" id="UP000001994">
    <property type="component" value="Chromosome"/>
</dbReference>
<dbReference type="GO" id="GO:0005525">
    <property type="term" value="F:GTP binding"/>
    <property type="evidence" value="ECO:0007669"/>
    <property type="project" value="UniProtKB-UniRule"/>
</dbReference>
<dbReference type="GO" id="GO:0042254">
    <property type="term" value="P:ribosome biogenesis"/>
    <property type="evidence" value="ECO:0007669"/>
    <property type="project" value="UniProtKB-KW"/>
</dbReference>
<dbReference type="CDD" id="cd01894">
    <property type="entry name" value="EngA1"/>
    <property type="match status" value="1"/>
</dbReference>
<dbReference type="CDD" id="cd01895">
    <property type="entry name" value="EngA2"/>
    <property type="match status" value="1"/>
</dbReference>
<dbReference type="FunFam" id="3.30.300.20:FF:000004">
    <property type="entry name" value="GTPase Der"/>
    <property type="match status" value="1"/>
</dbReference>
<dbReference type="FunFam" id="3.40.50.300:FF:000040">
    <property type="entry name" value="GTPase Der"/>
    <property type="match status" value="1"/>
</dbReference>
<dbReference type="FunFam" id="3.40.50.300:FF:000057">
    <property type="entry name" value="GTPase Der"/>
    <property type="match status" value="1"/>
</dbReference>
<dbReference type="Gene3D" id="3.30.300.20">
    <property type="match status" value="1"/>
</dbReference>
<dbReference type="Gene3D" id="3.40.50.300">
    <property type="entry name" value="P-loop containing nucleotide triphosphate hydrolases"/>
    <property type="match status" value="2"/>
</dbReference>
<dbReference type="HAMAP" id="MF_00195">
    <property type="entry name" value="GTPase_Der"/>
    <property type="match status" value="1"/>
</dbReference>
<dbReference type="InterPro" id="IPR031166">
    <property type="entry name" value="G_ENGA"/>
</dbReference>
<dbReference type="InterPro" id="IPR006073">
    <property type="entry name" value="GTP-bd"/>
</dbReference>
<dbReference type="InterPro" id="IPR016484">
    <property type="entry name" value="GTPase_Der"/>
</dbReference>
<dbReference type="InterPro" id="IPR032859">
    <property type="entry name" value="KH_dom-like"/>
</dbReference>
<dbReference type="InterPro" id="IPR015946">
    <property type="entry name" value="KH_dom-like_a/b"/>
</dbReference>
<dbReference type="InterPro" id="IPR027417">
    <property type="entry name" value="P-loop_NTPase"/>
</dbReference>
<dbReference type="InterPro" id="IPR005225">
    <property type="entry name" value="Small_GTP-bd"/>
</dbReference>
<dbReference type="NCBIfam" id="TIGR03594">
    <property type="entry name" value="GTPase_EngA"/>
    <property type="match status" value="1"/>
</dbReference>
<dbReference type="NCBIfam" id="TIGR00231">
    <property type="entry name" value="small_GTP"/>
    <property type="match status" value="2"/>
</dbReference>
<dbReference type="PANTHER" id="PTHR43834">
    <property type="entry name" value="GTPASE DER"/>
    <property type="match status" value="1"/>
</dbReference>
<dbReference type="PANTHER" id="PTHR43834:SF6">
    <property type="entry name" value="GTPASE DER"/>
    <property type="match status" value="1"/>
</dbReference>
<dbReference type="Pfam" id="PF14714">
    <property type="entry name" value="KH_dom-like"/>
    <property type="match status" value="1"/>
</dbReference>
<dbReference type="Pfam" id="PF01926">
    <property type="entry name" value="MMR_HSR1"/>
    <property type="match status" value="2"/>
</dbReference>
<dbReference type="PIRSF" id="PIRSF006485">
    <property type="entry name" value="GTP-binding_EngA"/>
    <property type="match status" value="1"/>
</dbReference>
<dbReference type="PRINTS" id="PR00326">
    <property type="entry name" value="GTP1OBG"/>
</dbReference>
<dbReference type="SUPFAM" id="SSF52540">
    <property type="entry name" value="P-loop containing nucleoside triphosphate hydrolases"/>
    <property type="match status" value="2"/>
</dbReference>
<dbReference type="PROSITE" id="PS51712">
    <property type="entry name" value="G_ENGA"/>
    <property type="match status" value="2"/>
</dbReference>
<comment type="function">
    <text evidence="1">GTPase that plays an essential role in the late steps of ribosome biogenesis.</text>
</comment>
<comment type="subunit">
    <text evidence="1">Associates with the 50S ribosomal subunit.</text>
</comment>
<comment type="similarity">
    <text evidence="1">Belongs to the TRAFAC class TrmE-Era-EngA-EngB-Septin-like GTPase superfamily. EngA (Der) GTPase family.</text>
</comment>
<gene>
    <name evidence="1" type="primary">der</name>
    <name type="synonym">engA</name>
    <name type="ordered locus">BRADO3746</name>
</gene>
<name>DER_BRASO</name>
<proteinExistence type="inferred from homology"/>
<evidence type="ECO:0000255" key="1">
    <source>
        <dbReference type="HAMAP-Rule" id="MF_00195"/>
    </source>
</evidence>
<evidence type="ECO:0000256" key="2">
    <source>
        <dbReference type="SAM" id="MobiDB-lite"/>
    </source>
</evidence>
<protein>
    <recommendedName>
        <fullName evidence="1">GTPase Der</fullName>
    </recommendedName>
    <alternativeName>
        <fullName evidence="1">GTP-binding protein EngA</fullName>
    </alternativeName>
</protein>
<keyword id="KW-0342">GTP-binding</keyword>
<keyword id="KW-0547">Nucleotide-binding</keyword>
<keyword id="KW-1185">Reference proteome</keyword>
<keyword id="KW-0677">Repeat</keyword>
<keyword id="KW-0690">Ribosome biogenesis</keyword>
<sequence>MSFTIAIIGRPNVGKSTLFNRLVGQKLALVDDMPGVTRDRREGEAKLHDLHFTIIDTAGLDEGPKGSLTARMQEQTETAIALADALFFVIDARVGLTPADRAFADFARRADKPVLLLANKSEGKHGELGAMESYALGLGDPIQISAEHGEGMGELYDALSKIVPPSDDEDDEREETDEERASRPIRVAIVGRPNAGKSTLINHLLGEERLLTSPEAGTTRDSIAVEVEWKGRGFRIFDTAGLRRRSRIEEKLEKLSVADALRAVRFAEVVVLMLDAQNRFEEQDLRIADLVEREGRALVLAVNKWDLMEAQPGQISALRRDADHWLPQITGAPIVAVSGLMGEGIDRLMQAIVEAYAVWNRRVPTAALNRWFEGAIANNPPPAVSGRRLKLNYITQTKARPPSFVLFCSRADAIPQSYLRYLVNSMRETFELPGTPVRITLREKANPFAHKRKRPN</sequence>